<evidence type="ECO:0000255" key="1">
    <source>
        <dbReference type="HAMAP-Rule" id="MF_01562"/>
    </source>
</evidence>
<sequence>MTEFIPFIILIGVAFVILSIILSFVPVGLWITAQFSGVKVGIFTLVGMRFRRVQPIRIINPLIKATKAGIDINIDKLEAHYLAGGDVNTLVDALIAAQRAEINLPFERAAAIDLAGRQVLEAVQVSVNPKVIETPKIAAVAKDGIEVMARARVTVRANIERLVGGAGEETIIARVGEGIVTTVGSATTHKHVLENPDMISKTVLSKGLDAGTAYEILSIDIADIDIGRNIGAQLQTDQADADKRIAQAKAEERRAMAVAKEQEMKAAVQEMRAKVVEAEAEVPKALATALREGKMGVMDYYNMKNIMADTDMRDSISKVAPNEKKYEEE</sequence>
<feature type="chain" id="PRO_0000318626" description="Flotillin-like protein FloA">
    <location>
        <begin position="1"/>
        <end position="329"/>
    </location>
</feature>
<feature type="transmembrane region" description="Helical" evidence="1">
    <location>
        <begin position="4"/>
        <end position="24"/>
    </location>
</feature>
<feature type="transmembrane region" description="Helical" evidence="1">
    <location>
        <begin position="27"/>
        <end position="47"/>
    </location>
</feature>
<accession>A6TSK9</accession>
<dbReference type="EMBL" id="CP000724">
    <property type="protein sequence ID" value="ABR49177.1"/>
    <property type="molecule type" value="Genomic_DNA"/>
</dbReference>
<dbReference type="RefSeq" id="WP_012064144.1">
    <property type="nucleotide sequence ID" value="NC_009633.1"/>
</dbReference>
<dbReference type="SMR" id="A6TSK9"/>
<dbReference type="STRING" id="293826.Amet_3037"/>
<dbReference type="KEGG" id="amt:Amet_3037"/>
<dbReference type="eggNOG" id="COG4864">
    <property type="taxonomic scope" value="Bacteria"/>
</dbReference>
<dbReference type="HOGENOM" id="CLU_836378_0_0_9"/>
<dbReference type="OrthoDB" id="9808365at2"/>
<dbReference type="Proteomes" id="UP000001572">
    <property type="component" value="Chromosome"/>
</dbReference>
<dbReference type="GO" id="GO:0045121">
    <property type="term" value="C:membrane raft"/>
    <property type="evidence" value="ECO:0007669"/>
    <property type="project" value="UniProtKB-SubCell"/>
</dbReference>
<dbReference type="GO" id="GO:0005886">
    <property type="term" value="C:plasma membrane"/>
    <property type="evidence" value="ECO:0007669"/>
    <property type="project" value="UniProtKB-SubCell"/>
</dbReference>
<dbReference type="HAMAP" id="MF_01562">
    <property type="entry name" value="FloA"/>
    <property type="match status" value="1"/>
</dbReference>
<dbReference type="InterPro" id="IPR022853">
    <property type="entry name" value="FloA"/>
</dbReference>
<dbReference type="NCBIfam" id="NF010186">
    <property type="entry name" value="PRK13665.1"/>
    <property type="match status" value="1"/>
</dbReference>
<dbReference type="Pfam" id="PF12127">
    <property type="entry name" value="FloA"/>
    <property type="match status" value="1"/>
</dbReference>
<keyword id="KW-1003">Cell membrane</keyword>
<keyword id="KW-0472">Membrane</keyword>
<keyword id="KW-1185">Reference proteome</keyword>
<keyword id="KW-0812">Transmembrane</keyword>
<keyword id="KW-1133">Transmembrane helix</keyword>
<protein>
    <recommendedName>
        <fullName evidence="1">Flotillin-like protein FloA</fullName>
    </recommendedName>
</protein>
<comment type="function">
    <text evidence="1">Found in functional membrane microdomains (FMM) that may be equivalent to eukaryotic membrane rafts. FMMs are highly dynamic and increase in number as cells age. Flotillins are thought to be important factors in membrane fluidity.</text>
</comment>
<comment type="subunit">
    <text evidence="1">Homooligomerizes.</text>
</comment>
<comment type="subcellular location">
    <subcellularLocation>
        <location evidence="1">Cell membrane</location>
        <topology evidence="1">Multi-pass membrane protein</topology>
    </subcellularLocation>
    <subcellularLocation>
        <location evidence="1">Membrane raft</location>
        <topology evidence="1">Multi-pass membrane protein</topology>
    </subcellularLocation>
</comment>
<comment type="similarity">
    <text evidence="1">Belongs to the flotillin-like FloA family.</text>
</comment>
<reference key="1">
    <citation type="journal article" date="2016" name="Genome Announc.">
        <title>Complete genome sequence of Alkaliphilus metalliredigens strain QYMF, an alkaliphilic and metal-reducing bacterium isolated from borax-contaminated leachate ponds.</title>
        <authorList>
            <person name="Hwang C."/>
            <person name="Copeland A."/>
            <person name="Lucas S."/>
            <person name="Lapidus A."/>
            <person name="Barry K."/>
            <person name="Detter J.C."/>
            <person name="Glavina Del Rio T."/>
            <person name="Hammon N."/>
            <person name="Israni S."/>
            <person name="Dalin E."/>
            <person name="Tice H."/>
            <person name="Pitluck S."/>
            <person name="Chertkov O."/>
            <person name="Brettin T."/>
            <person name="Bruce D."/>
            <person name="Han C."/>
            <person name="Schmutz J."/>
            <person name="Larimer F."/>
            <person name="Land M.L."/>
            <person name="Hauser L."/>
            <person name="Kyrpides N."/>
            <person name="Mikhailova N."/>
            <person name="Ye Q."/>
            <person name="Zhou J."/>
            <person name="Richardson P."/>
            <person name="Fields M.W."/>
        </authorList>
    </citation>
    <scope>NUCLEOTIDE SEQUENCE [LARGE SCALE GENOMIC DNA]</scope>
    <source>
        <strain>QYMF</strain>
    </source>
</reference>
<proteinExistence type="inferred from homology"/>
<gene>
    <name evidence="1" type="primary">floA</name>
    <name type="ordered locus">Amet_3037</name>
</gene>
<name>FLOA_ALKMQ</name>
<organism>
    <name type="scientific">Alkaliphilus metalliredigens (strain QYMF)</name>
    <dbReference type="NCBI Taxonomy" id="293826"/>
    <lineage>
        <taxon>Bacteria</taxon>
        <taxon>Bacillati</taxon>
        <taxon>Bacillota</taxon>
        <taxon>Clostridia</taxon>
        <taxon>Peptostreptococcales</taxon>
        <taxon>Natronincolaceae</taxon>
        <taxon>Alkaliphilus</taxon>
    </lineage>
</organism>